<organism>
    <name type="scientific">Mycobacterium tuberculosis (strain CDC 1551 / Oshkosh)</name>
    <dbReference type="NCBI Taxonomy" id="83331"/>
    <lineage>
        <taxon>Bacteria</taxon>
        <taxon>Bacillati</taxon>
        <taxon>Actinomycetota</taxon>
        <taxon>Actinomycetes</taxon>
        <taxon>Mycobacteriales</taxon>
        <taxon>Mycobacteriaceae</taxon>
        <taxon>Mycobacterium</taxon>
        <taxon>Mycobacterium tuberculosis complex</taxon>
    </lineage>
</organism>
<keyword id="KW-1185">Reference proteome</keyword>
<keyword id="KW-1277">Toxin-antitoxin system</keyword>
<reference key="1">
    <citation type="journal article" date="2002" name="J. Bacteriol.">
        <title>Whole-genome comparison of Mycobacterium tuberculosis clinical and laboratory strains.</title>
        <authorList>
            <person name="Fleischmann R.D."/>
            <person name="Alland D."/>
            <person name="Eisen J.A."/>
            <person name="Carpenter L."/>
            <person name="White O."/>
            <person name="Peterson J.D."/>
            <person name="DeBoy R.T."/>
            <person name="Dodson R.J."/>
            <person name="Gwinn M.L."/>
            <person name="Haft D.H."/>
            <person name="Hickey E.K."/>
            <person name="Kolonay J.F."/>
            <person name="Nelson W.C."/>
            <person name="Umayam L.A."/>
            <person name="Ermolaeva M.D."/>
            <person name="Salzberg S.L."/>
            <person name="Delcher A."/>
            <person name="Utterback T.R."/>
            <person name="Weidman J.F."/>
            <person name="Khouri H.M."/>
            <person name="Gill J."/>
            <person name="Mikula A."/>
            <person name="Bishai W."/>
            <person name="Jacobs W.R. Jr."/>
            <person name="Venter J.C."/>
            <person name="Fraser C.M."/>
        </authorList>
    </citation>
    <scope>NUCLEOTIDE SEQUENCE [LARGE SCALE GENOMIC DNA]</scope>
    <source>
        <strain>CDC 1551 / Oshkosh</strain>
    </source>
</reference>
<name>VPB24_MYCTO</name>
<sequence>MIRTQVQLPDELYRDAKRVAHEHEMTLAEVVRRGLEHMVRIYPRRDAASDTWQPPTPRRLGPFRASEETWRELANEA</sequence>
<dbReference type="EMBL" id="AE000516">
    <property type="protein sequence ID" value="AAK44471.1"/>
    <property type="molecule type" value="Genomic_DNA"/>
</dbReference>
<dbReference type="PIR" id="C70938">
    <property type="entry name" value="C70938"/>
</dbReference>
<dbReference type="RefSeq" id="WP_003401300.1">
    <property type="nucleotide sequence ID" value="NZ_KK341227.1"/>
</dbReference>
<dbReference type="SMR" id="P9WJ40"/>
<dbReference type="KEGG" id="mtc:MT0253"/>
<dbReference type="PATRIC" id="fig|83331.31.peg.271"/>
<dbReference type="HOGENOM" id="CLU_198279_0_0_11"/>
<dbReference type="Proteomes" id="UP000001020">
    <property type="component" value="Chromosome"/>
</dbReference>
<gene>
    <name type="primary">vapB24</name>
    <name type="ordered locus">MT0253</name>
</gene>
<feature type="chain" id="PRO_0000427896" description="Putative antitoxin VapB24">
    <location>
        <begin position="1"/>
        <end position="77"/>
    </location>
</feature>
<proteinExistence type="predicted"/>
<protein>
    <recommendedName>
        <fullName>Putative antitoxin VapB24</fullName>
    </recommendedName>
</protein>
<evidence type="ECO:0000305" key="1"/>
<comment type="function">
    <text evidence="1">Possibly the antitoxin component of a type II toxin-antitoxin (TA) system. Its cognate toxin is VapC24 (Potential).</text>
</comment>
<accession>P9WJ40</accession>
<accession>L0T4S6</accession>
<accession>O53662</accession>
<accession>Q7DA72</accession>